<keyword id="KW-0028">Amino-acid biosynthesis</keyword>
<keyword id="KW-0055">Arginine biosynthesis</keyword>
<keyword id="KW-0963">Cytoplasm</keyword>
<keyword id="KW-0456">Lyase</keyword>
<keyword id="KW-1185">Reference proteome</keyword>
<organism>
    <name type="scientific">Methylobacterium nodulans (strain LMG 21967 / CNCM I-2342 / ORS 2060)</name>
    <dbReference type="NCBI Taxonomy" id="460265"/>
    <lineage>
        <taxon>Bacteria</taxon>
        <taxon>Pseudomonadati</taxon>
        <taxon>Pseudomonadota</taxon>
        <taxon>Alphaproteobacteria</taxon>
        <taxon>Hyphomicrobiales</taxon>
        <taxon>Methylobacteriaceae</taxon>
        <taxon>Methylobacterium</taxon>
    </lineage>
</organism>
<comment type="catalytic activity">
    <reaction evidence="1">
        <text>2-(N(omega)-L-arginino)succinate = fumarate + L-arginine</text>
        <dbReference type="Rhea" id="RHEA:24020"/>
        <dbReference type="ChEBI" id="CHEBI:29806"/>
        <dbReference type="ChEBI" id="CHEBI:32682"/>
        <dbReference type="ChEBI" id="CHEBI:57472"/>
        <dbReference type="EC" id="4.3.2.1"/>
    </reaction>
</comment>
<comment type="pathway">
    <text evidence="1">Amino-acid biosynthesis; L-arginine biosynthesis; L-arginine from L-ornithine and carbamoyl phosphate: step 3/3.</text>
</comment>
<comment type="subcellular location">
    <subcellularLocation>
        <location evidence="1">Cytoplasm</location>
    </subcellularLocation>
</comment>
<comment type="similarity">
    <text evidence="1">Belongs to the lyase 1 family. Argininosuccinate lyase subfamily.</text>
</comment>
<sequence>MSNRMWGGRFASGPAEIMEEINASIGFDKRLAPQDIRGSLAHVAMLGKTGILPQADVAAIQAGLKTVQAEIESGAFTFARSLEDIHMNVESRLREIVGPAAGRLHTARSRNDQVATDMRLWVRDTLDELDAQAADLQRALAETALKHAGTVMPGFTHLQSAQPVTFGHHLLAYVEMLARDRGRFRDARARLNECPLGAAALAGTSFPIDRHATAAALGFDRPTANSLDSVADRDFALEALSAAAIAAVHLSRFAEEIVIWTSAQFGFVKLSDRFTTGSSIMPQKRNPDAAELVRAKAGRVIGALSGLLIVMKGLPLAYSKDMQEDKEGTFDALQTLSLCLAAMAGMVRDLEPVPEMLKAAAGSGYATATDLADWLVRELGLPFRDAHHVTGRLVGVAAARGVGLEALSLAEMQAEEPRITAAVYDVLGVENSVASRTSYGGTAPANVRAQAERWLKALSETK</sequence>
<dbReference type="EC" id="4.3.2.1" evidence="1"/>
<dbReference type="EMBL" id="CP001349">
    <property type="protein sequence ID" value="ACL62037.1"/>
    <property type="molecule type" value="Genomic_DNA"/>
</dbReference>
<dbReference type="RefSeq" id="WP_015933598.1">
    <property type="nucleotide sequence ID" value="NC_011894.1"/>
</dbReference>
<dbReference type="SMR" id="B8ILR2"/>
<dbReference type="STRING" id="460265.Mnod_7298"/>
<dbReference type="KEGG" id="mno:Mnod_7298"/>
<dbReference type="eggNOG" id="COG0165">
    <property type="taxonomic scope" value="Bacteria"/>
</dbReference>
<dbReference type="HOGENOM" id="CLU_027272_2_3_5"/>
<dbReference type="OrthoDB" id="9769623at2"/>
<dbReference type="UniPathway" id="UPA00068">
    <property type="reaction ID" value="UER00114"/>
</dbReference>
<dbReference type="Proteomes" id="UP000008207">
    <property type="component" value="Chromosome"/>
</dbReference>
<dbReference type="GO" id="GO:0005829">
    <property type="term" value="C:cytosol"/>
    <property type="evidence" value="ECO:0007669"/>
    <property type="project" value="TreeGrafter"/>
</dbReference>
<dbReference type="GO" id="GO:0004056">
    <property type="term" value="F:argininosuccinate lyase activity"/>
    <property type="evidence" value="ECO:0007669"/>
    <property type="project" value="UniProtKB-UniRule"/>
</dbReference>
<dbReference type="GO" id="GO:0042450">
    <property type="term" value="P:arginine biosynthetic process via ornithine"/>
    <property type="evidence" value="ECO:0007669"/>
    <property type="project" value="InterPro"/>
</dbReference>
<dbReference type="GO" id="GO:0006526">
    <property type="term" value="P:L-arginine biosynthetic process"/>
    <property type="evidence" value="ECO:0007669"/>
    <property type="project" value="UniProtKB-UniRule"/>
</dbReference>
<dbReference type="CDD" id="cd01359">
    <property type="entry name" value="Argininosuccinate_lyase"/>
    <property type="match status" value="1"/>
</dbReference>
<dbReference type="FunFam" id="1.10.275.10:FF:000002">
    <property type="entry name" value="Argininosuccinate lyase"/>
    <property type="match status" value="1"/>
</dbReference>
<dbReference type="FunFam" id="1.10.40.30:FF:000001">
    <property type="entry name" value="Argininosuccinate lyase"/>
    <property type="match status" value="1"/>
</dbReference>
<dbReference type="FunFam" id="1.20.200.10:FF:000006">
    <property type="entry name" value="Argininosuccinate lyase"/>
    <property type="match status" value="1"/>
</dbReference>
<dbReference type="Gene3D" id="1.10.40.30">
    <property type="entry name" value="Fumarase/aspartase (C-terminal domain)"/>
    <property type="match status" value="1"/>
</dbReference>
<dbReference type="Gene3D" id="1.20.200.10">
    <property type="entry name" value="Fumarase/aspartase (Central domain)"/>
    <property type="match status" value="1"/>
</dbReference>
<dbReference type="Gene3D" id="1.10.275.10">
    <property type="entry name" value="Fumarase/aspartase (N-terminal domain)"/>
    <property type="match status" value="1"/>
</dbReference>
<dbReference type="HAMAP" id="MF_00006">
    <property type="entry name" value="Arg_succ_lyase"/>
    <property type="match status" value="1"/>
</dbReference>
<dbReference type="InterPro" id="IPR029419">
    <property type="entry name" value="Arg_succ_lyase_C"/>
</dbReference>
<dbReference type="InterPro" id="IPR009049">
    <property type="entry name" value="Argininosuccinate_lyase"/>
</dbReference>
<dbReference type="InterPro" id="IPR024083">
    <property type="entry name" value="Fumarase/histidase_N"/>
</dbReference>
<dbReference type="InterPro" id="IPR020557">
    <property type="entry name" value="Fumarate_lyase_CS"/>
</dbReference>
<dbReference type="InterPro" id="IPR000362">
    <property type="entry name" value="Fumarate_lyase_fam"/>
</dbReference>
<dbReference type="InterPro" id="IPR022761">
    <property type="entry name" value="Fumarate_lyase_N"/>
</dbReference>
<dbReference type="InterPro" id="IPR008948">
    <property type="entry name" value="L-Aspartase-like"/>
</dbReference>
<dbReference type="NCBIfam" id="TIGR00838">
    <property type="entry name" value="argH"/>
    <property type="match status" value="1"/>
</dbReference>
<dbReference type="PANTHER" id="PTHR43814">
    <property type="entry name" value="ARGININOSUCCINATE LYASE"/>
    <property type="match status" value="1"/>
</dbReference>
<dbReference type="PANTHER" id="PTHR43814:SF1">
    <property type="entry name" value="ARGININOSUCCINATE LYASE"/>
    <property type="match status" value="1"/>
</dbReference>
<dbReference type="Pfam" id="PF14698">
    <property type="entry name" value="ASL_C2"/>
    <property type="match status" value="1"/>
</dbReference>
<dbReference type="Pfam" id="PF00206">
    <property type="entry name" value="Lyase_1"/>
    <property type="match status" value="1"/>
</dbReference>
<dbReference type="PRINTS" id="PR00145">
    <property type="entry name" value="ARGSUCLYASE"/>
</dbReference>
<dbReference type="PRINTS" id="PR00149">
    <property type="entry name" value="FUMRATELYASE"/>
</dbReference>
<dbReference type="SUPFAM" id="SSF48557">
    <property type="entry name" value="L-aspartase-like"/>
    <property type="match status" value="1"/>
</dbReference>
<dbReference type="PROSITE" id="PS00163">
    <property type="entry name" value="FUMARATE_LYASES"/>
    <property type="match status" value="1"/>
</dbReference>
<name>ARLY_METNO</name>
<gene>
    <name evidence="1" type="primary">argH</name>
    <name type="ordered locus">Mnod_7298</name>
</gene>
<feature type="chain" id="PRO_1000116332" description="Argininosuccinate lyase">
    <location>
        <begin position="1"/>
        <end position="462"/>
    </location>
</feature>
<accession>B8ILR2</accession>
<evidence type="ECO:0000255" key="1">
    <source>
        <dbReference type="HAMAP-Rule" id="MF_00006"/>
    </source>
</evidence>
<proteinExistence type="inferred from homology"/>
<reference key="1">
    <citation type="submission" date="2009-01" db="EMBL/GenBank/DDBJ databases">
        <title>Complete sequence of chromosome of Methylobacterium nodulans ORS 2060.</title>
        <authorList>
            <consortium name="US DOE Joint Genome Institute"/>
            <person name="Lucas S."/>
            <person name="Copeland A."/>
            <person name="Lapidus A."/>
            <person name="Glavina del Rio T."/>
            <person name="Dalin E."/>
            <person name="Tice H."/>
            <person name="Bruce D."/>
            <person name="Goodwin L."/>
            <person name="Pitluck S."/>
            <person name="Sims D."/>
            <person name="Brettin T."/>
            <person name="Detter J.C."/>
            <person name="Han C."/>
            <person name="Larimer F."/>
            <person name="Land M."/>
            <person name="Hauser L."/>
            <person name="Kyrpides N."/>
            <person name="Ivanova N."/>
            <person name="Marx C.J."/>
            <person name="Richardson P."/>
        </authorList>
    </citation>
    <scope>NUCLEOTIDE SEQUENCE [LARGE SCALE GENOMIC DNA]</scope>
    <source>
        <strain>LMG 21967 / CNCM I-2342 / ORS 2060</strain>
    </source>
</reference>
<protein>
    <recommendedName>
        <fullName evidence="1">Argininosuccinate lyase</fullName>
        <shortName evidence="1">ASAL</shortName>
        <ecNumber evidence="1">4.3.2.1</ecNumber>
    </recommendedName>
    <alternativeName>
        <fullName evidence="1">Arginosuccinase</fullName>
    </alternativeName>
</protein>